<comment type="function">
    <text evidence="2">With S4 and S5 plays an important role in translational accuracy.</text>
</comment>
<comment type="function">
    <text evidence="2">Interacts with and stabilizes bases of the 16S rRNA that are involved in tRNA selection in the A site and with the mRNA backbone. Located at the interface of the 30S and 50S subunits, it traverses the body of the 30S subunit contacting proteins on the other side and probably holding the rRNA structure together. The combined cluster of proteins S8, S12 and S17 appears to hold together the shoulder and platform of the 30S subunit.</text>
</comment>
<comment type="subunit">
    <text evidence="2">Part of the 30S ribosomal subunit. Contacts proteins S8 and S17. May interact with IF1 in the 30S initiation complex.</text>
</comment>
<comment type="similarity">
    <text evidence="2">Belongs to the universal ribosomal protein uS12 family.</text>
</comment>
<organism>
    <name type="scientific">Mycobacterium tuberculosis (strain ATCC 25177 / H37Ra)</name>
    <dbReference type="NCBI Taxonomy" id="419947"/>
    <lineage>
        <taxon>Bacteria</taxon>
        <taxon>Bacillati</taxon>
        <taxon>Actinomycetota</taxon>
        <taxon>Actinomycetes</taxon>
        <taxon>Mycobacteriales</taxon>
        <taxon>Mycobacteriaceae</taxon>
        <taxon>Mycobacterium</taxon>
        <taxon>Mycobacterium tuberculosis complex</taxon>
    </lineage>
</organism>
<protein>
    <recommendedName>
        <fullName evidence="2">Small ribosomal subunit protein uS12</fullName>
    </recommendedName>
    <alternativeName>
        <fullName evidence="4">30S ribosomal protein S12</fullName>
    </alternativeName>
</protein>
<proteinExistence type="inferred from homology"/>
<evidence type="ECO:0000250" key="1"/>
<evidence type="ECO:0000255" key="2">
    <source>
        <dbReference type="HAMAP-Rule" id="MF_00403"/>
    </source>
</evidence>
<evidence type="ECO:0000256" key="3">
    <source>
        <dbReference type="SAM" id="MobiDB-lite"/>
    </source>
</evidence>
<evidence type="ECO:0000305" key="4"/>
<sequence>MPTIQQLVRKGRRDKISKVKTAALKGSPQRRGVCTRVYTTTPKKPNSALRKVARVKLTSQVEVTAYIPGEGHNLQEHSMVLVRGGRVKDLPGVRYKIIRGSLDTQGVKNRKQARSRYGAKKEKG</sequence>
<name>RS12_MYCTA</name>
<dbReference type="EMBL" id="CP000611">
    <property type="protein sequence ID" value="ABQ72418.1"/>
    <property type="molecule type" value="Genomic_DNA"/>
</dbReference>
<dbReference type="RefSeq" id="WP_003403453.1">
    <property type="nucleotide sequence ID" value="NZ_CP016972.1"/>
</dbReference>
<dbReference type="SMR" id="A5U068"/>
<dbReference type="GeneID" id="45424644"/>
<dbReference type="KEGG" id="mra:MRA_0691"/>
<dbReference type="eggNOG" id="COG0048">
    <property type="taxonomic scope" value="Bacteria"/>
</dbReference>
<dbReference type="HOGENOM" id="CLU_104295_1_2_11"/>
<dbReference type="Proteomes" id="UP000001988">
    <property type="component" value="Chromosome"/>
</dbReference>
<dbReference type="GO" id="GO:0015935">
    <property type="term" value="C:small ribosomal subunit"/>
    <property type="evidence" value="ECO:0007669"/>
    <property type="project" value="InterPro"/>
</dbReference>
<dbReference type="GO" id="GO:0019843">
    <property type="term" value="F:rRNA binding"/>
    <property type="evidence" value="ECO:0007669"/>
    <property type="project" value="UniProtKB-UniRule"/>
</dbReference>
<dbReference type="GO" id="GO:0003735">
    <property type="term" value="F:structural constituent of ribosome"/>
    <property type="evidence" value="ECO:0007669"/>
    <property type="project" value="InterPro"/>
</dbReference>
<dbReference type="GO" id="GO:0000049">
    <property type="term" value="F:tRNA binding"/>
    <property type="evidence" value="ECO:0007669"/>
    <property type="project" value="UniProtKB-UniRule"/>
</dbReference>
<dbReference type="GO" id="GO:0006412">
    <property type="term" value="P:translation"/>
    <property type="evidence" value="ECO:0007669"/>
    <property type="project" value="UniProtKB-UniRule"/>
</dbReference>
<dbReference type="CDD" id="cd03368">
    <property type="entry name" value="Ribosomal_S12"/>
    <property type="match status" value="1"/>
</dbReference>
<dbReference type="FunFam" id="2.40.50.140:FF:000001">
    <property type="entry name" value="30S ribosomal protein S12"/>
    <property type="match status" value="1"/>
</dbReference>
<dbReference type="Gene3D" id="2.40.50.140">
    <property type="entry name" value="Nucleic acid-binding proteins"/>
    <property type="match status" value="1"/>
</dbReference>
<dbReference type="HAMAP" id="MF_00403_B">
    <property type="entry name" value="Ribosomal_uS12_B"/>
    <property type="match status" value="1"/>
</dbReference>
<dbReference type="InterPro" id="IPR012340">
    <property type="entry name" value="NA-bd_OB-fold"/>
</dbReference>
<dbReference type="InterPro" id="IPR006032">
    <property type="entry name" value="Ribosomal_uS12"/>
</dbReference>
<dbReference type="InterPro" id="IPR005679">
    <property type="entry name" value="Ribosomal_uS12_bac"/>
</dbReference>
<dbReference type="NCBIfam" id="TIGR00981">
    <property type="entry name" value="rpsL_bact"/>
    <property type="match status" value="1"/>
</dbReference>
<dbReference type="PANTHER" id="PTHR11652">
    <property type="entry name" value="30S RIBOSOMAL PROTEIN S12 FAMILY MEMBER"/>
    <property type="match status" value="1"/>
</dbReference>
<dbReference type="Pfam" id="PF00164">
    <property type="entry name" value="Ribosom_S12_S23"/>
    <property type="match status" value="1"/>
</dbReference>
<dbReference type="PIRSF" id="PIRSF002133">
    <property type="entry name" value="Ribosomal_S12/S23"/>
    <property type="match status" value="1"/>
</dbReference>
<dbReference type="PRINTS" id="PR01034">
    <property type="entry name" value="RIBOSOMALS12"/>
</dbReference>
<dbReference type="SUPFAM" id="SSF50249">
    <property type="entry name" value="Nucleic acid-binding proteins"/>
    <property type="match status" value="1"/>
</dbReference>
<dbReference type="PROSITE" id="PS00055">
    <property type="entry name" value="RIBOSOMAL_S12"/>
    <property type="match status" value="1"/>
</dbReference>
<feature type="chain" id="PRO_1000049796" description="Small ribosomal subunit protein uS12">
    <location>
        <begin position="1"/>
        <end position="124"/>
    </location>
</feature>
<feature type="region of interest" description="Disordered" evidence="3">
    <location>
        <begin position="105"/>
        <end position="124"/>
    </location>
</feature>
<feature type="compositionally biased region" description="Basic residues" evidence="3">
    <location>
        <begin position="108"/>
        <end position="118"/>
    </location>
</feature>
<feature type="modified residue" description="3-methylthioaspartic acid" evidence="1">
    <location>
        <position position="89"/>
    </location>
</feature>
<accession>A5U068</accession>
<gene>
    <name evidence="2" type="primary">rpsL</name>
    <name type="ordered locus">MRA_0691</name>
</gene>
<reference key="1">
    <citation type="journal article" date="2008" name="PLoS ONE">
        <title>Genetic basis of virulence attenuation revealed by comparative genomic analysis of Mycobacterium tuberculosis strain H37Ra versus H37Rv.</title>
        <authorList>
            <person name="Zheng H."/>
            <person name="Lu L."/>
            <person name="Wang B."/>
            <person name="Pu S."/>
            <person name="Zhang X."/>
            <person name="Zhu G."/>
            <person name="Shi W."/>
            <person name="Zhang L."/>
            <person name="Wang H."/>
            <person name="Wang S."/>
            <person name="Zhao G."/>
            <person name="Zhang Y."/>
        </authorList>
    </citation>
    <scope>NUCLEOTIDE SEQUENCE [LARGE SCALE GENOMIC DNA]</scope>
    <source>
        <strain>ATCC 25177 / H37Ra</strain>
    </source>
</reference>
<keyword id="KW-0488">Methylation</keyword>
<keyword id="KW-1185">Reference proteome</keyword>
<keyword id="KW-0687">Ribonucleoprotein</keyword>
<keyword id="KW-0689">Ribosomal protein</keyword>
<keyword id="KW-0694">RNA-binding</keyword>
<keyword id="KW-0699">rRNA-binding</keyword>
<keyword id="KW-0820">tRNA-binding</keyword>